<protein>
    <recommendedName>
        <fullName evidence="1">Leucine--tRNA ligase</fullName>
        <ecNumber evidence="1">6.1.1.4</ecNumber>
    </recommendedName>
    <alternativeName>
        <fullName evidence="1">Leucyl-tRNA synthetase</fullName>
        <shortName evidence="1">LeuRS</shortName>
    </alternativeName>
</protein>
<feature type="chain" id="PRO_0000334755" description="Leucine--tRNA ligase">
    <location>
        <begin position="1"/>
        <end position="830"/>
    </location>
</feature>
<feature type="short sequence motif" description="'HIGH' region">
    <location>
        <begin position="34"/>
        <end position="44"/>
    </location>
</feature>
<feature type="short sequence motif" description="'KMSKS' region">
    <location>
        <begin position="592"/>
        <end position="596"/>
    </location>
</feature>
<feature type="binding site" evidence="1">
    <location>
        <position position="595"/>
    </location>
    <ligand>
        <name>ATP</name>
        <dbReference type="ChEBI" id="CHEBI:30616"/>
    </ligand>
</feature>
<proteinExistence type="inferred from homology"/>
<keyword id="KW-0030">Aminoacyl-tRNA synthetase</keyword>
<keyword id="KW-0067">ATP-binding</keyword>
<keyword id="KW-0963">Cytoplasm</keyword>
<keyword id="KW-0436">Ligase</keyword>
<keyword id="KW-0547">Nucleotide-binding</keyword>
<keyword id="KW-0648">Protein biosynthesis</keyword>
<organism>
    <name type="scientific">Ehrlichia ruminantium (strain Welgevonden)</name>
    <dbReference type="NCBI Taxonomy" id="254945"/>
    <lineage>
        <taxon>Bacteria</taxon>
        <taxon>Pseudomonadati</taxon>
        <taxon>Pseudomonadota</taxon>
        <taxon>Alphaproteobacteria</taxon>
        <taxon>Rickettsiales</taxon>
        <taxon>Anaplasmataceae</taxon>
        <taxon>Ehrlichia</taxon>
    </lineage>
</organism>
<name>SYL_EHRRW</name>
<evidence type="ECO:0000255" key="1">
    <source>
        <dbReference type="HAMAP-Rule" id="MF_00049"/>
    </source>
</evidence>
<gene>
    <name evidence="1" type="primary">leuS</name>
    <name type="ordered locus">Erum3010</name>
    <name type="ordered locus">ERWE_CDS_03070</name>
</gene>
<accession>Q5HBM8</accession>
<accession>Q5FE96</accession>
<comment type="catalytic activity">
    <reaction evidence="1">
        <text>tRNA(Leu) + L-leucine + ATP = L-leucyl-tRNA(Leu) + AMP + diphosphate</text>
        <dbReference type="Rhea" id="RHEA:11688"/>
        <dbReference type="Rhea" id="RHEA-COMP:9613"/>
        <dbReference type="Rhea" id="RHEA-COMP:9622"/>
        <dbReference type="ChEBI" id="CHEBI:30616"/>
        <dbReference type="ChEBI" id="CHEBI:33019"/>
        <dbReference type="ChEBI" id="CHEBI:57427"/>
        <dbReference type="ChEBI" id="CHEBI:78442"/>
        <dbReference type="ChEBI" id="CHEBI:78494"/>
        <dbReference type="ChEBI" id="CHEBI:456215"/>
        <dbReference type="EC" id="6.1.1.4"/>
    </reaction>
</comment>
<comment type="subcellular location">
    <subcellularLocation>
        <location evidence="1">Cytoplasm</location>
    </subcellularLocation>
</comment>
<comment type="similarity">
    <text evidence="1">Belongs to the class-I aminoacyl-tRNA synthetase family.</text>
</comment>
<reference key="1">
    <citation type="journal article" date="2005" name="Proc. Natl. Acad. Sci. U.S.A.">
        <title>The genome of the heartwater agent Ehrlichia ruminantium contains multiple tandem repeats of actively variable copy number.</title>
        <authorList>
            <person name="Collins N.E."/>
            <person name="Liebenberg J."/>
            <person name="de Villiers E.P."/>
            <person name="Brayton K.A."/>
            <person name="Louw E."/>
            <person name="Pretorius A."/>
            <person name="Faber F.E."/>
            <person name="van Heerden H."/>
            <person name="Josemans A."/>
            <person name="van Kleef M."/>
            <person name="Steyn H.C."/>
            <person name="van Strijp M.F."/>
            <person name="Zweygarth E."/>
            <person name="Jongejan F."/>
            <person name="Maillard J.C."/>
            <person name="Berthier D."/>
            <person name="Botha M."/>
            <person name="Joubert F."/>
            <person name="Corton C.H."/>
            <person name="Thomson N.R."/>
            <person name="Allsopp M.T."/>
            <person name="Allsopp B.A."/>
        </authorList>
    </citation>
    <scope>NUCLEOTIDE SEQUENCE [LARGE SCALE GENOMIC DNA]</scope>
    <source>
        <strain>Welgevonden</strain>
    </source>
</reference>
<reference key="2">
    <citation type="journal article" date="2006" name="J. Bacteriol.">
        <title>Comparative genomic analysis of three strains of Ehrlichia ruminantium reveals an active process of genome size plasticity.</title>
        <authorList>
            <person name="Frutos R."/>
            <person name="Viari A."/>
            <person name="Ferraz C."/>
            <person name="Morgat A."/>
            <person name="Eychenie S."/>
            <person name="Kandassamy Y."/>
            <person name="Chantal I."/>
            <person name="Bensaid A."/>
            <person name="Coissac E."/>
            <person name="Vachiery N."/>
            <person name="Demaille J."/>
            <person name="Martinez D."/>
        </authorList>
    </citation>
    <scope>NUCLEOTIDE SEQUENCE [LARGE SCALE GENOMIC DNA]</scope>
    <source>
        <strain>Welgevonden</strain>
    </source>
</reference>
<sequence>MHYNFKEVERDVQEKWDFTVNVKDVQCYVLEMFPYPSGNIHMGHLRNYTIGDVIARYKRACGLHVFHPIGWDAFGLPAENAALSYNISPQVWTRKNIDNMRSQLKSIGLSYNWDKEFATCDAEYYKYEQEFFLDFLKYGLAYRKESLVNWDPVDQTVLANEQVIDGRGWRSGAIIEKRKLSQWFLKITDFAAELLDDLKSLNQWPEKVKLMQERWIGKSEGVIIDFQIVGINEVLQVFTTSPHTLFGASFIAVSFDHPILKYVNDVQLIQLIDNFDRKDLIDESSINTVEKFGINSGLVARHPLLDVDLPIYVANFVLMNYGTGAVFCCPAHDQRDFDFAKKYSLPIRQVIFPEQNVDLEQEAYVGSGIMGCSGFLDGMTVDDAKKSMIEKLISLGICKKQVYYRLHDWGISRQRYWGCPIPIIYCKKCGIVPVDKKDLPITLPEDIDFTKSGNPLDNHPTWKYTKCPSCGADAKRETDTFDTFFESSWYFAAFCGIGKGIDKDVCNKLLPVDYYIGGIEHAVLHLLYSRFFCRALTRCGYFDVKEPFSSLITQGMVCHSTYLDKYGNYLFPEDGKKMIQEGKYVTVGRAEKMSKSKKNVVHLDDIIDKYGADSARLFILSDTPPERDIEWLDENIEGVSRYLNKLWKMIVDYDQLEQNFVCDNISSDTLEYRINVHKILNDITNDLEFYRFNCAVAKFRELSNVISEMIRLSINHHVVSEAIYILIRVVEPFIPHIAEKLWQIVGGQGMLCNQLWPKVDPQLLIKKNVNIVVQVNGKFIKAVSVPNDIDDDTLKSIALEVAQRRIGNSSVKNIYIIPGRVINIVITKSS</sequence>
<dbReference type="EC" id="6.1.1.4" evidence="1"/>
<dbReference type="EMBL" id="CR767821">
    <property type="protein sequence ID" value="CAH58018.1"/>
    <property type="molecule type" value="Genomic_DNA"/>
</dbReference>
<dbReference type="EMBL" id="CR925678">
    <property type="protein sequence ID" value="CAI26801.1"/>
    <property type="molecule type" value="Genomic_DNA"/>
</dbReference>
<dbReference type="RefSeq" id="WP_011154983.1">
    <property type="nucleotide sequence ID" value="NC_005295.2"/>
</dbReference>
<dbReference type="SMR" id="Q5HBM8"/>
<dbReference type="GeneID" id="33058451"/>
<dbReference type="KEGG" id="eru:Erum3010"/>
<dbReference type="KEGG" id="erw:ERWE_CDS_03070"/>
<dbReference type="eggNOG" id="COG0495">
    <property type="taxonomic scope" value="Bacteria"/>
</dbReference>
<dbReference type="HOGENOM" id="CLU_004427_0_0_5"/>
<dbReference type="Proteomes" id="UP000001021">
    <property type="component" value="Chromosome"/>
</dbReference>
<dbReference type="GO" id="GO:0005829">
    <property type="term" value="C:cytosol"/>
    <property type="evidence" value="ECO:0007669"/>
    <property type="project" value="TreeGrafter"/>
</dbReference>
<dbReference type="GO" id="GO:0002161">
    <property type="term" value="F:aminoacyl-tRNA deacylase activity"/>
    <property type="evidence" value="ECO:0007669"/>
    <property type="project" value="InterPro"/>
</dbReference>
<dbReference type="GO" id="GO:0005524">
    <property type="term" value="F:ATP binding"/>
    <property type="evidence" value="ECO:0007669"/>
    <property type="project" value="UniProtKB-UniRule"/>
</dbReference>
<dbReference type="GO" id="GO:0004823">
    <property type="term" value="F:leucine-tRNA ligase activity"/>
    <property type="evidence" value="ECO:0007669"/>
    <property type="project" value="UniProtKB-UniRule"/>
</dbReference>
<dbReference type="GO" id="GO:0006429">
    <property type="term" value="P:leucyl-tRNA aminoacylation"/>
    <property type="evidence" value="ECO:0007669"/>
    <property type="project" value="UniProtKB-UniRule"/>
</dbReference>
<dbReference type="CDD" id="cd07958">
    <property type="entry name" value="Anticodon_Ia_Leu_BEm"/>
    <property type="match status" value="1"/>
</dbReference>
<dbReference type="CDD" id="cd00812">
    <property type="entry name" value="LeuRS_core"/>
    <property type="match status" value="1"/>
</dbReference>
<dbReference type="FunFam" id="1.10.730.10:FF:000002">
    <property type="entry name" value="Leucine--tRNA ligase"/>
    <property type="match status" value="1"/>
</dbReference>
<dbReference type="Gene3D" id="3.40.50.620">
    <property type="entry name" value="HUPs"/>
    <property type="match status" value="2"/>
</dbReference>
<dbReference type="Gene3D" id="1.10.730.10">
    <property type="entry name" value="Isoleucyl-tRNA Synthetase, Domain 1"/>
    <property type="match status" value="1"/>
</dbReference>
<dbReference type="Gene3D" id="3.90.740.10">
    <property type="entry name" value="Valyl/Leucyl/Isoleucyl-tRNA synthetase, editing domain"/>
    <property type="match status" value="1"/>
</dbReference>
<dbReference type="HAMAP" id="MF_00049_B">
    <property type="entry name" value="Leu_tRNA_synth_B"/>
    <property type="match status" value="1"/>
</dbReference>
<dbReference type="InterPro" id="IPR001412">
    <property type="entry name" value="aa-tRNA-synth_I_CS"/>
</dbReference>
<dbReference type="InterPro" id="IPR002300">
    <property type="entry name" value="aa-tRNA-synth_Ia"/>
</dbReference>
<dbReference type="InterPro" id="IPR002302">
    <property type="entry name" value="Leu-tRNA-ligase"/>
</dbReference>
<dbReference type="InterPro" id="IPR025709">
    <property type="entry name" value="Leu_tRNA-synth_edit"/>
</dbReference>
<dbReference type="InterPro" id="IPR013155">
    <property type="entry name" value="M/V/L/I-tRNA-synth_anticd-bd"/>
</dbReference>
<dbReference type="InterPro" id="IPR015413">
    <property type="entry name" value="Methionyl/Leucyl_tRNA_Synth"/>
</dbReference>
<dbReference type="InterPro" id="IPR014729">
    <property type="entry name" value="Rossmann-like_a/b/a_fold"/>
</dbReference>
<dbReference type="InterPro" id="IPR009080">
    <property type="entry name" value="tRNAsynth_Ia_anticodon-bd"/>
</dbReference>
<dbReference type="InterPro" id="IPR009008">
    <property type="entry name" value="Val/Leu/Ile-tRNA-synth_edit"/>
</dbReference>
<dbReference type="NCBIfam" id="TIGR00396">
    <property type="entry name" value="leuS_bact"/>
    <property type="match status" value="1"/>
</dbReference>
<dbReference type="PANTHER" id="PTHR43740:SF2">
    <property type="entry name" value="LEUCINE--TRNA LIGASE, MITOCHONDRIAL"/>
    <property type="match status" value="1"/>
</dbReference>
<dbReference type="PANTHER" id="PTHR43740">
    <property type="entry name" value="LEUCYL-TRNA SYNTHETASE"/>
    <property type="match status" value="1"/>
</dbReference>
<dbReference type="Pfam" id="PF08264">
    <property type="entry name" value="Anticodon_1"/>
    <property type="match status" value="1"/>
</dbReference>
<dbReference type="Pfam" id="PF00133">
    <property type="entry name" value="tRNA-synt_1"/>
    <property type="match status" value="2"/>
</dbReference>
<dbReference type="Pfam" id="PF13603">
    <property type="entry name" value="tRNA-synt_1_2"/>
    <property type="match status" value="1"/>
</dbReference>
<dbReference type="Pfam" id="PF09334">
    <property type="entry name" value="tRNA-synt_1g"/>
    <property type="match status" value="1"/>
</dbReference>
<dbReference type="PRINTS" id="PR00985">
    <property type="entry name" value="TRNASYNTHLEU"/>
</dbReference>
<dbReference type="SUPFAM" id="SSF47323">
    <property type="entry name" value="Anticodon-binding domain of a subclass of class I aminoacyl-tRNA synthetases"/>
    <property type="match status" value="1"/>
</dbReference>
<dbReference type="SUPFAM" id="SSF52374">
    <property type="entry name" value="Nucleotidylyl transferase"/>
    <property type="match status" value="1"/>
</dbReference>
<dbReference type="SUPFAM" id="SSF50677">
    <property type="entry name" value="ValRS/IleRS/LeuRS editing domain"/>
    <property type="match status" value="1"/>
</dbReference>
<dbReference type="PROSITE" id="PS00178">
    <property type="entry name" value="AA_TRNA_LIGASE_I"/>
    <property type="match status" value="1"/>
</dbReference>